<reference key="1">
    <citation type="journal article" date="1995" name="J. Mol. Biol.">
        <title>The DNA sequence of equine herpesvirus 2.</title>
        <authorList>
            <person name="Telford E.A.R."/>
            <person name="Watson M.S."/>
            <person name="Aird H.C."/>
            <person name="Perry J."/>
            <person name="Davison A.J."/>
        </authorList>
    </citation>
    <scope>NUCLEOTIDE SEQUENCE [LARGE SCALE GENOMIC DNA]</scope>
</reference>
<organismHost>
    <name type="scientific">Equus caballus</name>
    <name type="common">Horse</name>
    <dbReference type="NCBI Taxonomy" id="9796"/>
</organismHost>
<accession>Q66625</accession>
<sequence length="763" mass="87117">MMRYSLLCTCLFLAWWAIGGRGLATPYPSTPEFSGSPGSRATSGSPGTPKSLSATPRKILPTAKSVNYTEMIEKNPSLTIDLGNQTKYQLNWTDVVKVIPGELIEKMWEESNVTESLWFTLNKFTDVYKKDTIFKNFTGHFTTKYVCNVSQGEPNYNVSQREVKEIKEYDGKFGIPAPVVLSDLLASVNYVLRPQHATHNVFYTTRDYDAYFSVFFGDKDTQMLGYITRDFSFVTAVSWTNGTFRFLTTMMGYTDRLPVLKGHLIYKTDFIVGQNERFSMVILTTFLDHAYFESLVHPDFQGIFKDLTERPPAEVIVELQDKMVELEATQKCPVQSMSKITFEYVLKFAFSHFMAVAGLEDAGQHVKVRCLFDVLHELALLRAMTATCFHPFYFKGFTSNHLSSVATVMVTRTPIKQLKTFSHGDRDAVLATLQVADNVKEATDRILWAAAEIMDDIYTAYTDSFYLKLEDRGHLLDVFVLLRDKEKQHQVLKNRNLMIIYLTAGSMCNSVEISTVTSMLSDKNHYSLRRTFSPCLMSLRFDFTKDKLISETRLLPNMTYLRAEDGATGFFNILRDRHVATFNLLPVSSCLKAYAKNILMVIPMFNLTYVVSTAPISIGINYDVRDTFIEKKMFVSAVMSNCSTFPEGSGTRQIPIVYNITRSRSECPLCGAAFLAYDERDGLESMMYVTNRRVERNIFSDASPFFDNQNLHTHYLMLFKNGTVIEIRGRYRERTAQFIIITLFILTLMFGAFLAFKIFVYCC</sequence>
<proteinExistence type="inferred from homology"/>
<evidence type="ECO:0000255" key="1">
    <source>
        <dbReference type="HAMAP-Rule" id="MF_04033"/>
    </source>
</evidence>
<evidence type="ECO:0000256" key="2">
    <source>
        <dbReference type="SAM" id="MobiDB-lite"/>
    </source>
</evidence>
<dbReference type="EMBL" id="U20824">
    <property type="protein sequence ID" value="AAC13809.1"/>
    <property type="molecule type" value="Genomic_DNA"/>
</dbReference>
<dbReference type="PIR" id="S55616">
    <property type="entry name" value="S55616"/>
</dbReference>
<dbReference type="SMR" id="Q66625"/>
<dbReference type="GlyCosmos" id="Q66625">
    <property type="glycosylation" value="13 sites, No reported glycans"/>
</dbReference>
<dbReference type="KEGG" id="vg:1461019"/>
<dbReference type="Proteomes" id="UP000007083">
    <property type="component" value="Segment"/>
</dbReference>
<dbReference type="GO" id="GO:0044175">
    <property type="term" value="C:host cell endosome membrane"/>
    <property type="evidence" value="ECO:0007669"/>
    <property type="project" value="UniProtKB-SubCell"/>
</dbReference>
<dbReference type="GO" id="GO:0020002">
    <property type="term" value="C:host cell plasma membrane"/>
    <property type="evidence" value="ECO:0007669"/>
    <property type="project" value="UniProtKB-SubCell"/>
</dbReference>
<dbReference type="GO" id="GO:0016020">
    <property type="term" value="C:membrane"/>
    <property type="evidence" value="ECO:0007669"/>
    <property type="project" value="UniProtKB-KW"/>
</dbReference>
<dbReference type="GO" id="GO:0019031">
    <property type="term" value="C:viral envelope"/>
    <property type="evidence" value="ECO:0007669"/>
    <property type="project" value="UniProtKB-KW"/>
</dbReference>
<dbReference type="GO" id="GO:0055036">
    <property type="term" value="C:virion membrane"/>
    <property type="evidence" value="ECO:0007669"/>
    <property type="project" value="UniProtKB-SubCell"/>
</dbReference>
<dbReference type="GO" id="GO:0019064">
    <property type="term" value="P:fusion of virus membrane with host plasma membrane"/>
    <property type="evidence" value="ECO:0007669"/>
    <property type="project" value="UniProtKB-KW"/>
</dbReference>
<dbReference type="GO" id="GO:0046718">
    <property type="term" value="P:symbiont entry into host cell"/>
    <property type="evidence" value="ECO:0007669"/>
    <property type="project" value="UniProtKB-KW"/>
</dbReference>
<dbReference type="Gene3D" id="1.20.58.1340">
    <property type="match status" value="1"/>
</dbReference>
<dbReference type="Gene3D" id="2.60.40.3190">
    <property type="entry name" value="Herpesvirus glycoprotein H, C-terminal domain"/>
    <property type="match status" value="1"/>
</dbReference>
<dbReference type="Gene3D" id="3.90.380.20">
    <property type="entry name" value="Herpesvirus glycoprotein H, domain D-II"/>
    <property type="match status" value="1"/>
</dbReference>
<dbReference type="HAMAP" id="MF_04033">
    <property type="entry name" value="HSV_GH"/>
    <property type="match status" value="1"/>
</dbReference>
<dbReference type="InterPro" id="IPR003493">
    <property type="entry name" value="Herpes_gH"/>
</dbReference>
<dbReference type="InterPro" id="IPR035305">
    <property type="entry name" value="Herpes_glycoH_C"/>
</dbReference>
<dbReference type="InterPro" id="IPR038172">
    <property type="entry name" value="Herpes_glycoH_C_sf"/>
</dbReference>
<dbReference type="Pfam" id="PF17488">
    <property type="entry name" value="Herpes_glycoH_C"/>
    <property type="match status" value="1"/>
</dbReference>
<dbReference type="Pfam" id="PF02489">
    <property type="entry name" value="Herpes_glycop_H"/>
    <property type="match status" value="1"/>
</dbReference>
<protein>
    <recommendedName>
        <fullName evidence="1">Envelope glycoprotein H</fullName>
        <shortName evidence="1">gH</shortName>
    </recommendedName>
</protein>
<keyword id="KW-1169">Fusion of virus membrane with host cell membrane</keyword>
<keyword id="KW-1168">Fusion of virus membrane with host membrane</keyword>
<keyword id="KW-0325">Glycoprotein</keyword>
<keyword id="KW-1032">Host cell membrane</keyword>
<keyword id="KW-1039">Host endosome</keyword>
<keyword id="KW-1043">Host membrane</keyword>
<keyword id="KW-0472">Membrane</keyword>
<keyword id="KW-1185">Reference proteome</keyword>
<keyword id="KW-0730">Sialic acid</keyword>
<keyword id="KW-0732">Signal</keyword>
<keyword id="KW-0812">Transmembrane</keyword>
<keyword id="KW-1133">Transmembrane helix</keyword>
<keyword id="KW-0261">Viral envelope protein</keyword>
<keyword id="KW-1162">Viral penetration into host cytoplasm</keyword>
<keyword id="KW-0946">Virion</keyword>
<keyword id="KW-1160">Virus entry into host cell</keyword>
<name>GH_EHV2</name>
<comment type="function">
    <text evidence="1">The heterodimer glycoprotein H-glycoprotein L is required for the fusion of viral and plasma membranes leading to virus entry into the host cell. Following initial binding to host receptor, membrane fusion is mediated by the fusion machinery composed of gB and the heterodimer gH/gL. May also be involved in the fusion between the virion envelope and the outer nuclear membrane during virion morphogenesis.</text>
</comment>
<comment type="subunit">
    <text evidence="1">Interacts with glycoprotein L (gL); this interaction is necessary for the correct processing and cell surface expression of gH. The heterodimer gH/gL seems to interact with gB trimers during fusion.</text>
</comment>
<comment type="subcellular location">
    <subcellularLocation>
        <location evidence="1">Virion membrane</location>
        <topology evidence="1">Single-pass type I membrane protein</topology>
    </subcellularLocation>
    <subcellularLocation>
        <location evidence="1">Host cell membrane</location>
        <topology evidence="1">Single-pass type I membrane protein</topology>
    </subcellularLocation>
    <subcellularLocation>
        <location evidence="1">Host endosome membrane</location>
        <topology evidence="1">Single-pass type I membrane protein</topology>
    </subcellularLocation>
    <text evidence="1">During virion morphogenesis, this protein probably accumulates in the endosomes and trans-Golgi where secondary envelopment occurs. It is probably transported to the cell surface from where it is endocytosed and directed to the trans-Golgi network (TGN).</text>
</comment>
<comment type="PTM">
    <text evidence="1">N-glycosylated, O-glycosylated, and sialylated.</text>
</comment>
<comment type="similarity">
    <text evidence="1">Belongs to the herpesviridae glycoprotein H family.</text>
</comment>
<feature type="signal peptide" evidence="1">
    <location>
        <begin position="1"/>
        <end position="22"/>
    </location>
</feature>
<feature type="chain" id="PRO_0000436651" description="Envelope glycoprotein H" evidence="1">
    <location>
        <begin position="23"/>
        <end position="763"/>
    </location>
</feature>
<feature type="topological domain" description="Virion surface" evidence="1">
    <location>
        <begin position="23"/>
        <end position="739"/>
    </location>
</feature>
<feature type="transmembrane region" description="Helical" evidence="1">
    <location>
        <begin position="740"/>
        <end position="760"/>
    </location>
</feature>
<feature type="topological domain" description="Intravirion" evidence="1">
    <location>
        <begin position="761"/>
        <end position="763"/>
    </location>
</feature>
<feature type="region of interest" description="Disordered" evidence="2">
    <location>
        <begin position="29"/>
        <end position="56"/>
    </location>
</feature>
<feature type="region of interest" description="Interaction with gL" evidence="1">
    <location>
        <begin position="219"/>
        <end position="283"/>
    </location>
</feature>
<feature type="compositionally biased region" description="Polar residues" evidence="2">
    <location>
        <begin position="31"/>
        <end position="54"/>
    </location>
</feature>
<feature type="glycosylation site" description="N-linked (GlcNAc...) asparagine; by host" evidence="1">
    <location>
        <position position="67"/>
    </location>
</feature>
<feature type="glycosylation site" description="N-linked (GlcNAc...) asparagine; by host" evidence="1">
    <location>
        <position position="84"/>
    </location>
</feature>
<feature type="glycosylation site" description="N-linked (GlcNAc...) asparagine; by host" evidence="1">
    <location>
        <position position="91"/>
    </location>
</feature>
<feature type="glycosylation site" description="N-linked (GlcNAc...) asparagine; by host" evidence="1">
    <location>
        <position position="112"/>
    </location>
</feature>
<feature type="glycosylation site" description="N-linked (GlcNAc...) asparagine; by host" evidence="1">
    <location>
        <position position="136"/>
    </location>
</feature>
<feature type="glycosylation site" description="N-linked (GlcNAc...) asparagine; by host" evidence="1">
    <location>
        <position position="148"/>
    </location>
</feature>
<feature type="glycosylation site" description="N-linked (GlcNAc...) asparagine; by host" evidence="1">
    <location>
        <position position="157"/>
    </location>
</feature>
<feature type="glycosylation site" description="N-linked (GlcNAc...) asparagine; by host" evidence="1">
    <location>
        <position position="241"/>
    </location>
</feature>
<feature type="glycosylation site" description="N-linked (GlcNAc...) asparagine; by host" evidence="1">
    <location>
        <position position="557"/>
    </location>
</feature>
<feature type="glycosylation site" description="N-linked (GlcNAc...) asparagine; by host" evidence="1">
    <location>
        <position position="606"/>
    </location>
</feature>
<feature type="glycosylation site" description="N-linked (GlcNAc...) asparagine; by host" evidence="1">
    <location>
        <position position="641"/>
    </location>
</feature>
<feature type="glycosylation site" description="N-linked (GlcNAc...) asparagine; by host" evidence="1">
    <location>
        <position position="659"/>
    </location>
</feature>
<feature type="glycosylation site" description="N-linked (GlcNAc...) asparagine; by host" evidence="1">
    <location>
        <position position="721"/>
    </location>
</feature>
<organism>
    <name type="scientific">Equine herpesvirus 2 (strain 86/87)</name>
    <name type="common">EHV-2</name>
    <dbReference type="NCBI Taxonomy" id="82831"/>
    <lineage>
        <taxon>Viruses</taxon>
        <taxon>Duplodnaviria</taxon>
        <taxon>Heunggongvirae</taxon>
        <taxon>Peploviricota</taxon>
        <taxon>Herviviricetes</taxon>
        <taxon>Herpesvirales</taxon>
        <taxon>Orthoherpesviridae</taxon>
        <taxon>Gammaherpesvirinae</taxon>
        <taxon>Percavirus</taxon>
        <taxon>Percavirus equidgamma2</taxon>
        <taxon>Equid gammaherpesvirus 2</taxon>
    </lineage>
</organism>
<gene>
    <name evidence="1" type="primary">gH</name>
    <name type="ORF">22</name>
</gene>